<name>PYC1_SYNY3</name>
<organism>
    <name type="scientific">Synechocystis sp. (strain ATCC 27184 / PCC 6803 / Kazusa)</name>
    <dbReference type="NCBI Taxonomy" id="1111708"/>
    <lineage>
        <taxon>Bacteria</taxon>
        <taxon>Bacillati</taxon>
        <taxon>Cyanobacteriota</taxon>
        <taxon>Cyanophyceae</taxon>
        <taxon>Synechococcales</taxon>
        <taxon>Merismopediaceae</taxon>
        <taxon>Synechocystis</taxon>
    </lineage>
</organism>
<proteinExistence type="evidence at protein level"/>
<protein>
    <recommendedName>
        <fullName>Phycobilisome 7.8 kDa linker polypeptide, allophycocyanin-associated, core</fullName>
    </recommendedName>
    <alternativeName>
        <fullName>LC 7.8</fullName>
    </alternativeName>
</protein>
<sequence length="67" mass="7706">MRMFRITACVPSQTRIRTQRELQNTYFTKLVPYDNSFREQQRIMKMGGKIVKVELATGRPGTNAGLA</sequence>
<reference key="1">
    <citation type="journal article" date="1992" name="J. Biol. Chem.">
        <title>Excitation energy transfer from phycocyanin to chlorophyll in an apcA-defective mutant of Synechocystis sp. PCC 6803.</title>
        <authorList>
            <person name="Su X."/>
            <person name="Goodman P."/>
            <person name="Bogorad L."/>
        </authorList>
    </citation>
    <scope>NUCLEOTIDE SEQUENCE [GENOMIC DNA]</scope>
</reference>
<reference key="2">
    <citation type="journal article" date="1996" name="DNA Res.">
        <title>Sequence analysis of the genome of the unicellular cyanobacterium Synechocystis sp. strain PCC6803. II. Sequence determination of the entire genome and assignment of potential protein-coding regions.</title>
        <authorList>
            <person name="Kaneko T."/>
            <person name="Sato S."/>
            <person name="Kotani H."/>
            <person name="Tanaka A."/>
            <person name="Asamizu E."/>
            <person name="Nakamura Y."/>
            <person name="Miyajima N."/>
            <person name="Hirosawa M."/>
            <person name="Sugiura M."/>
            <person name="Sasamoto S."/>
            <person name="Kimura T."/>
            <person name="Hosouchi T."/>
            <person name="Matsuno A."/>
            <person name="Muraki A."/>
            <person name="Nakazaki N."/>
            <person name="Naruo K."/>
            <person name="Okumura S."/>
            <person name="Shimpo S."/>
            <person name="Takeuchi C."/>
            <person name="Wada T."/>
            <person name="Watanabe A."/>
            <person name="Yamada M."/>
            <person name="Yasuda M."/>
            <person name="Tabata S."/>
        </authorList>
    </citation>
    <scope>NUCLEOTIDE SEQUENCE [LARGE SCALE GENOMIC DNA]</scope>
    <source>
        <strain>ATCC 27184 / PCC 6803 / Kazusa</strain>
    </source>
</reference>
<keyword id="KW-0002">3D-structure</keyword>
<keyword id="KW-0042">Antenna complex</keyword>
<keyword id="KW-0472">Membrane</keyword>
<keyword id="KW-0602">Photosynthesis</keyword>
<keyword id="KW-0605">Phycobilisome</keyword>
<keyword id="KW-1185">Reference proteome</keyword>
<keyword id="KW-0793">Thylakoid</keyword>
<dbReference type="EMBL" id="M77135">
    <property type="protein sequence ID" value="AAA27278.1"/>
    <property type="molecule type" value="Genomic_DNA"/>
</dbReference>
<dbReference type="EMBL" id="BA000022">
    <property type="protein sequence ID" value="BAA17876.1"/>
    <property type="molecule type" value="Genomic_DNA"/>
</dbReference>
<dbReference type="PDB" id="7SC7">
    <property type="method" value="EM"/>
    <property type="resolution" value="2.80 A"/>
    <property type="chains" value="BA/BB/CI/CJ/DD/DU=1-67"/>
</dbReference>
<dbReference type="PDB" id="7SC9">
    <property type="method" value="EM"/>
    <property type="resolution" value="2.60 A"/>
    <property type="chains" value="BA/BB/CJ/CK/DF/DX=1-67"/>
</dbReference>
<dbReference type="PDB" id="7SCB">
    <property type="method" value="EM"/>
    <property type="resolution" value="2.50 A"/>
    <property type="chains" value="BB/BC=1-67"/>
</dbReference>
<dbReference type="PDB" id="7SCC">
    <property type="method" value="EM"/>
    <property type="resolution" value="2.60 A"/>
    <property type="chains" value="AO/BK=1-67"/>
</dbReference>
<dbReference type="PDBsum" id="7SC7"/>
<dbReference type="PDBsum" id="7SC9"/>
<dbReference type="PDBsum" id="7SCB"/>
<dbReference type="PDBsum" id="7SCC"/>
<dbReference type="EMDB" id="EMD-25028"/>
<dbReference type="EMDB" id="EMD-25030"/>
<dbReference type="EMDB" id="EMD-25032"/>
<dbReference type="EMDB" id="EMD-25033"/>
<dbReference type="SMR" id="Q01950"/>
<dbReference type="IntAct" id="Q01950">
    <property type="interactions" value="1"/>
</dbReference>
<dbReference type="STRING" id="1148.gene:10498745"/>
<dbReference type="PaxDb" id="1148-1652959"/>
<dbReference type="EnsemblBacteria" id="BAA17876">
    <property type="protein sequence ID" value="BAA17876"/>
    <property type="gene ID" value="BAA17876"/>
</dbReference>
<dbReference type="KEGG" id="syn:ssr3383"/>
<dbReference type="eggNOG" id="ENOG5032S63">
    <property type="taxonomic scope" value="Bacteria"/>
</dbReference>
<dbReference type="InParanoid" id="Q01950"/>
<dbReference type="Proteomes" id="UP000001425">
    <property type="component" value="Chromosome"/>
</dbReference>
<dbReference type="GO" id="GO:0030089">
    <property type="term" value="C:phycobilisome"/>
    <property type="evidence" value="ECO:0007669"/>
    <property type="project" value="UniProtKB-KW"/>
</dbReference>
<dbReference type="GO" id="GO:0031676">
    <property type="term" value="C:plasma membrane-derived thylakoid membrane"/>
    <property type="evidence" value="ECO:0007669"/>
    <property type="project" value="UniProtKB-SubCell"/>
</dbReference>
<dbReference type="GO" id="GO:0015979">
    <property type="term" value="P:photosynthesis"/>
    <property type="evidence" value="ECO:0007669"/>
    <property type="project" value="UniProtKB-KW"/>
</dbReference>
<dbReference type="Gene3D" id="3.30.1490.170">
    <property type="entry name" value="Allophycocyanin linker chain (domain)"/>
    <property type="match status" value="1"/>
</dbReference>
<dbReference type="InterPro" id="IPR011134">
    <property type="entry name" value="Allophyco_linker"/>
</dbReference>
<dbReference type="InterPro" id="IPR011064">
    <property type="entry name" value="Allophyco_linker_chain"/>
</dbReference>
<dbReference type="InterPro" id="IPR008213">
    <property type="entry name" value="CpcD-like_dom"/>
</dbReference>
<dbReference type="Pfam" id="PF01383">
    <property type="entry name" value="CpcD"/>
    <property type="match status" value="1"/>
</dbReference>
<dbReference type="PIRSF" id="PIRSF000083">
    <property type="entry name" value="Allophyco_linker"/>
    <property type="match status" value="1"/>
</dbReference>
<dbReference type="SMART" id="SM01094">
    <property type="entry name" value="CpcD"/>
    <property type="match status" value="1"/>
</dbReference>
<dbReference type="SUPFAM" id="SSF54580">
    <property type="entry name" value="Allophycocyanin linker chain (domain)"/>
    <property type="match status" value="1"/>
</dbReference>
<dbReference type="PROSITE" id="PS51441">
    <property type="entry name" value="CPCD_LIKE"/>
    <property type="match status" value="1"/>
</dbReference>
<feature type="chain" id="PRO_0000199240" description="Phycobilisome 7.8 kDa linker polypeptide, allophycocyanin-associated, core">
    <location>
        <begin position="1"/>
        <end position="67"/>
    </location>
</feature>
<feature type="domain" description="CpcD-like" evidence="2">
    <location>
        <begin position="1"/>
        <end position="56"/>
    </location>
</feature>
<evidence type="ECO:0000250" key="1"/>
<evidence type="ECO:0000255" key="2">
    <source>
        <dbReference type="PROSITE-ProRule" id="PRU00771"/>
    </source>
</evidence>
<evidence type="ECO:0000305" key="3"/>
<comment type="function">
    <text evidence="1">Rod linker protein, associated with allophycocyanin. Linker polypeptides determine the state of aggregation and the location of the disk-shaped phycobiliprotein units within the phycobilisome and modulate their spectroscopic properties in order to mediate a directed and optimal energy transfer (By similarity).</text>
</comment>
<comment type="subcellular location">
    <subcellularLocation>
        <location evidence="1">Cellular thylakoid membrane</location>
        <topology evidence="1">Peripheral membrane protein</topology>
        <orientation evidence="1">Cytoplasmic side</orientation>
    </subcellularLocation>
    <text evidence="1">This protein occurs in the rod, it is associated with allophycocyanin.</text>
</comment>
<comment type="similarity">
    <text evidence="3">Belongs to the phycobilisome linker protein family.</text>
</comment>
<gene>
    <name type="primary">apcC</name>
    <name type="ordered locus">ssr3383</name>
</gene>
<accession>Q01950</accession>